<reference key="1">
    <citation type="journal article" date="2008" name="PLoS Genet.">
        <title>Genomic islands in the pathogenic filamentous fungus Aspergillus fumigatus.</title>
        <authorList>
            <person name="Fedorova N.D."/>
            <person name="Khaldi N."/>
            <person name="Joardar V.S."/>
            <person name="Maiti R."/>
            <person name="Amedeo P."/>
            <person name="Anderson M.J."/>
            <person name="Crabtree J."/>
            <person name="Silva J.C."/>
            <person name="Badger J.H."/>
            <person name="Albarraq A."/>
            <person name="Angiuoli S."/>
            <person name="Bussey H."/>
            <person name="Bowyer P."/>
            <person name="Cotty P.J."/>
            <person name="Dyer P.S."/>
            <person name="Egan A."/>
            <person name="Galens K."/>
            <person name="Fraser-Liggett C.M."/>
            <person name="Haas B.J."/>
            <person name="Inman J.M."/>
            <person name="Kent R."/>
            <person name="Lemieux S."/>
            <person name="Malavazi I."/>
            <person name="Orvis J."/>
            <person name="Roemer T."/>
            <person name="Ronning C.M."/>
            <person name="Sundaram J.P."/>
            <person name="Sutton G."/>
            <person name="Turner G."/>
            <person name="Venter J.C."/>
            <person name="White O.R."/>
            <person name="Whitty B.R."/>
            <person name="Youngman P."/>
            <person name="Wolfe K.H."/>
            <person name="Goldman G.H."/>
            <person name="Wortman J.R."/>
            <person name="Jiang B."/>
            <person name="Denning D.W."/>
            <person name="Nierman W.C."/>
        </authorList>
    </citation>
    <scope>NUCLEOTIDE SEQUENCE [LARGE SCALE GENOMIC DNA]</scope>
    <source>
        <strain>CBS 144.89 / FGSC A1163 / CEA10</strain>
    </source>
</reference>
<keyword id="KW-0119">Carbohydrate metabolism</keyword>
<keyword id="KW-0961">Cell wall biogenesis/degradation</keyword>
<keyword id="KW-1015">Disulfide bond</keyword>
<keyword id="KW-0325">Glycoprotein</keyword>
<keyword id="KW-0326">Glycosidase</keyword>
<keyword id="KW-0378">Hydrolase</keyword>
<keyword id="KW-0464">Manganese</keyword>
<keyword id="KW-0479">Metal-binding</keyword>
<keyword id="KW-0624">Polysaccharide degradation</keyword>
<keyword id="KW-0964">Secreted</keyword>
<keyword id="KW-0732">Signal</keyword>
<proteinExistence type="inferred from homology"/>
<comment type="function">
    <text evidence="1">Beta-glucanases participate in the metabolism of beta-glucan, the main structural component of the cell wall. It could also function biosynthetically as a transglycosylase (By similarity).</text>
</comment>
<comment type="catalytic activity">
    <reaction>
        <text>Successive hydrolysis of beta-D-glucose units from the non-reducing ends of (1-&gt;3)-beta-D-glucans, releasing alpha-glucose.</text>
        <dbReference type="EC" id="3.2.1.58"/>
    </reaction>
</comment>
<comment type="cofactor">
    <cofactor evidence="1">
        <name>Mn(2+)</name>
        <dbReference type="ChEBI" id="CHEBI:29035"/>
    </cofactor>
</comment>
<comment type="subunit">
    <text evidence="1">Monomer.</text>
</comment>
<comment type="subcellular location">
    <subcellularLocation>
        <location evidence="1">Secreted</location>
    </subcellularLocation>
</comment>
<comment type="similarity">
    <text evidence="3">Belongs to the glycosyl hydrolase 5 (cellulase A) family.</text>
</comment>
<sequence length="416" mass="45745">MIFKFSQKALVALYLVVGLAEAVPSKSRVVSRASTFDYNGIVRGVNIGGWLVLEPWITPSIFDNAGDAAVDEWTLTATLGQDQAKAVLSQHWSTFITQDDFQQIAQAGMNHVRIPIGYWAVSSLPDEPYVDGQLEYLDNAISWAREAGLKVVIDLHGAPGSQNGFDNSGRKGPIAWQQGDTVSQTVDAFRALAERYLPQSDVVTAIEALNEPNIPGGVSEAGLRDYYNQIADVVRQIDPDTSVFLSDGFLSTESWNGFKTGEDVVMDTHHYEMFDNYLISLDIDGHVKSACDFGKQIEGSDKPVVVGEWSGAVTDCTKHLNGKGVSTRYQGEYANNVKYGDCANTTQGSVADLSDQERTDTRRFIEAQLDAYEGKNGWLFWTWKTEGAPGWDMQDLLANGVFPSPLTDRQFPNQCA</sequence>
<accession>B0XN12</accession>
<evidence type="ECO:0000250" key="1"/>
<evidence type="ECO:0000255" key="2"/>
<evidence type="ECO:0000305" key="3"/>
<dbReference type="EC" id="3.2.1.58"/>
<dbReference type="EMBL" id="DS499594">
    <property type="protein sequence ID" value="EDP55704.1"/>
    <property type="molecule type" value="Genomic_DNA"/>
</dbReference>
<dbReference type="SMR" id="B0XN12"/>
<dbReference type="GlyCosmos" id="B0XN12">
    <property type="glycosylation" value="1 site, No reported glycans"/>
</dbReference>
<dbReference type="EnsemblFungi" id="EDP55704">
    <property type="protein sequence ID" value="EDP55704"/>
    <property type="gene ID" value="AFUB_004010"/>
</dbReference>
<dbReference type="VEuPathDB" id="FungiDB:AFUB_004010"/>
<dbReference type="HOGENOM" id="CLU_004624_0_1_1"/>
<dbReference type="OrthoDB" id="18589at5052"/>
<dbReference type="PhylomeDB" id="B0XN12"/>
<dbReference type="Proteomes" id="UP000001699">
    <property type="component" value="Unassembled WGS sequence"/>
</dbReference>
<dbReference type="GO" id="GO:0009986">
    <property type="term" value="C:cell surface"/>
    <property type="evidence" value="ECO:0007669"/>
    <property type="project" value="TreeGrafter"/>
</dbReference>
<dbReference type="GO" id="GO:0005576">
    <property type="term" value="C:extracellular region"/>
    <property type="evidence" value="ECO:0007669"/>
    <property type="project" value="UniProtKB-SubCell"/>
</dbReference>
<dbReference type="GO" id="GO:0004338">
    <property type="term" value="F:glucan exo-1,3-beta-glucosidase activity"/>
    <property type="evidence" value="ECO:0007669"/>
    <property type="project" value="UniProtKB-EC"/>
</dbReference>
<dbReference type="GO" id="GO:0046872">
    <property type="term" value="F:metal ion binding"/>
    <property type="evidence" value="ECO:0007669"/>
    <property type="project" value="UniProtKB-KW"/>
</dbReference>
<dbReference type="GO" id="GO:0071555">
    <property type="term" value="P:cell wall organization"/>
    <property type="evidence" value="ECO:0007669"/>
    <property type="project" value="UniProtKB-KW"/>
</dbReference>
<dbReference type="GO" id="GO:0009251">
    <property type="term" value="P:glucan catabolic process"/>
    <property type="evidence" value="ECO:0007669"/>
    <property type="project" value="TreeGrafter"/>
</dbReference>
<dbReference type="FunFam" id="3.20.20.80:FF:000033">
    <property type="entry name" value="Glucan 1,3-beta-glucosidase A"/>
    <property type="match status" value="1"/>
</dbReference>
<dbReference type="Gene3D" id="3.20.20.80">
    <property type="entry name" value="Glycosidases"/>
    <property type="match status" value="1"/>
</dbReference>
<dbReference type="InterPro" id="IPR001547">
    <property type="entry name" value="Glyco_hydro_5"/>
</dbReference>
<dbReference type="InterPro" id="IPR017853">
    <property type="entry name" value="Glycoside_hydrolase_SF"/>
</dbReference>
<dbReference type="InterPro" id="IPR050386">
    <property type="entry name" value="Glycosyl_hydrolase_5"/>
</dbReference>
<dbReference type="PANTHER" id="PTHR31297:SF1">
    <property type="entry name" value="GLUCAN 1,3-BETA-GLUCOSIDASE I_II-RELATED"/>
    <property type="match status" value="1"/>
</dbReference>
<dbReference type="PANTHER" id="PTHR31297">
    <property type="entry name" value="GLUCAN ENDO-1,6-BETA-GLUCOSIDASE B"/>
    <property type="match status" value="1"/>
</dbReference>
<dbReference type="Pfam" id="PF00150">
    <property type="entry name" value="Cellulase"/>
    <property type="match status" value="1"/>
</dbReference>
<dbReference type="SUPFAM" id="SSF51445">
    <property type="entry name" value="(Trans)glycosidases"/>
    <property type="match status" value="1"/>
</dbReference>
<protein>
    <recommendedName>
        <fullName>Probable glucan 1,3-beta-glucosidase A</fullName>
        <ecNumber>3.2.1.58</ecNumber>
    </recommendedName>
    <alternativeName>
        <fullName>Exo-1,3-beta-glucanase 1</fullName>
    </alternativeName>
    <alternativeName>
        <fullName>Exo-1,3-beta-glucanase A</fullName>
    </alternativeName>
</protein>
<gene>
    <name type="primary">exgA</name>
    <name type="synonym">exg1</name>
    <name type="ORF">AFUB_004010</name>
</gene>
<feature type="signal peptide" evidence="2">
    <location>
        <begin position="1"/>
        <end position="22"/>
    </location>
</feature>
<feature type="chain" id="PRO_0000393528" description="Probable glucan 1,3-beta-glucosidase A">
    <location>
        <begin position="23"/>
        <end position="416"/>
    </location>
</feature>
<feature type="active site" description="Proton donor" evidence="1">
    <location>
        <position position="211"/>
    </location>
</feature>
<feature type="active site" description="Nucleophile" evidence="1">
    <location>
        <position position="308"/>
    </location>
</feature>
<feature type="glycosylation site" description="N-linked (GlcNAc...) asparagine" evidence="2">
    <location>
        <position position="344"/>
    </location>
</feature>
<feature type="disulfide bond" evidence="1">
    <location>
        <begin position="291"/>
        <end position="415"/>
    </location>
</feature>
<feature type="disulfide bond" evidence="1">
    <location>
        <begin position="316"/>
        <end position="342"/>
    </location>
</feature>
<name>EXGA_ASPFC</name>
<organism>
    <name type="scientific">Aspergillus fumigatus (strain CBS 144.89 / FGSC A1163 / CEA10)</name>
    <name type="common">Neosartorya fumigata</name>
    <dbReference type="NCBI Taxonomy" id="451804"/>
    <lineage>
        <taxon>Eukaryota</taxon>
        <taxon>Fungi</taxon>
        <taxon>Dikarya</taxon>
        <taxon>Ascomycota</taxon>
        <taxon>Pezizomycotina</taxon>
        <taxon>Eurotiomycetes</taxon>
        <taxon>Eurotiomycetidae</taxon>
        <taxon>Eurotiales</taxon>
        <taxon>Aspergillaceae</taxon>
        <taxon>Aspergillus</taxon>
        <taxon>Aspergillus subgen. Fumigati</taxon>
    </lineage>
</organism>